<keyword id="KW-0963">Cytoplasm</keyword>
<keyword id="KW-0378">Hydrolase</keyword>
<keyword id="KW-0694">RNA-binding</keyword>
<keyword id="KW-0820">tRNA-binding</keyword>
<sequence length="188" mass="21271">MIKALVGLGNPGPKYKDTKHNIGFKVIDEVAFKLHLKNPLEKYMSIVFHIKEQDIYLIKPQTFMNNSGIALRQFVEKTKIAPSDILVIYDDMDLPIGTIKMKPNGGSGGHNGVESIIRELRTQEFPRLRIGIGRPASKEEVTNYVLSPFEYKDTPIVKKTIEKASEYAIRSLEEPLEYVMTLCNTKSS</sequence>
<proteinExistence type="inferred from homology"/>
<comment type="function">
    <text evidence="1">Hydrolyzes ribosome-free peptidyl-tRNAs (with 1 or more amino acids incorporated), which drop off the ribosome during protein synthesis, or as a result of ribosome stalling.</text>
</comment>
<comment type="function">
    <text evidence="1">Catalyzes the release of premature peptidyl moieties from peptidyl-tRNA molecules trapped in stalled 50S ribosomal subunits, and thus maintains levels of free tRNAs and 50S ribosomes.</text>
</comment>
<comment type="catalytic activity">
    <reaction evidence="1">
        <text>an N-acyl-L-alpha-aminoacyl-tRNA + H2O = an N-acyl-L-amino acid + a tRNA + H(+)</text>
        <dbReference type="Rhea" id="RHEA:54448"/>
        <dbReference type="Rhea" id="RHEA-COMP:10123"/>
        <dbReference type="Rhea" id="RHEA-COMP:13883"/>
        <dbReference type="ChEBI" id="CHEBI:15377"/>
        <dbReference type="ChEBI" id="CHEBI:15378"/>
        <dbReference type="ChEBI" id="CHEBI:59874"/>
        <dbReference type="ChEBI" id="CHEBI:78442"/>
        <dbReference type="ChEBI" id="CHEBI:138191"/>
        <dbReference type="EC" id="3.1.1.29"/>
    </reaction>
</comment>
<comment type="subunit">
    <text evidence="1">Monomer.</text>
</comment>
<comment type="subcellular location">
    <subcellularLocation>
        <location evidence="1">Cytoplasm</location>
    </subcellularLocation>
</comment>
<comment type="similarity">
    <text evidence="1">Belongs to the PTH family.</text>
</comment>
<feature type="chain" id="PRO_1000202588" description="Peptidyl-tRNA hydrolase">
    <location>
        <begin position="1"/>
        <end position="188"/>
    </location>
</feature>
<feature type="active site" description="Proton acceptor" evidence="1">
    <location>
        <position position="20"/>
    </location>
</feature>
<feature type="binding site" evidence="1">
    <location>
        <position position="15"/>
    </location>
    <ligand>
        <name>tRNA</name>
        <dbReference type="ChEBI" id="CHEBI:17843"/>
    </ligand>
</feature>
<feature type="binding site" evidence="1">
    <location>
        <position position="63"/>
    </location>
    <ligand>
        <name>tRNA</name>
        <dbReference type="ChEBI" id="CHEBI:17843"/>
    </ligand>
</feature>
<feature type="binding site" evidence="1">
    <location>
        <position position="65"/>
    </location>
    <ligand>
        <name>tRNA</name>
        <dbReference type="ChEBI" id="CHEBI:17843"/>
    </ligand>
</feature>
<feature type="binding site" evidence="1">
    <location>
        <position position="111"/>
    </location>
    <ligand>
        <name>tRNA</name>
        <dbReference type="ChEBI" id="CHEBI:17843"/>
    </ligand>
</feature>
<feature type="site" description="Discriminates between blocked and unblocked aminoacyl-tRNA" evidence="1">
    <location>
        <position position="10"/>
    </location>
</feature>
<feature type="site" description="Stabilizes the basic form of H active site to accept a proton" evidence="1">
    <location>
        <position position="90"/>
    </location>
</feature>
<organism>
    <name type="scientific">Hydrogenobaculum sp. (strain Y04AAS1)</name>
    <dbReference type="NCBI Taxonomy" id="380749"/>
    <lineage>
        <taxon>Bacteria</taxon>
        <taxon>Pseudomonadati</taxon>
        <taxon>Aquificota</taxon>
        <taxon>Aquificia</taxon>
        <taxon>Aquificales</taxon>
        <taxon>Aquificaceae</taxon>
        <taxon>Hydrogenobaculum</taxon>
    </lineage>
</organism>
<gene>
    <name evidence="1" type="primary">pth</name>
    <name type="ordered locus">HY04AAS1_0954</name>
</gene>
<accession>B4U930</accession>
<protein>
    <recommendedName>
        <fullName evidence="1">Peptidyl-tRNA hydrolase</fullName>
        <shortName evidence="1">Pth</shortName>
        <ecNumber evidence="1">3.1.1.29</ecNumber>
    </recommendedName>
</protein>
<reference key="1">
    <citation type="journal article" date="2009" name="J. Bacteriol.">
        <title>Complete and draft genome sequences of six members of the Aquificales.</title>
        <authorList>
            <person name="Reysenbach A.-L."/>
            <person name="Hamamura N."/>
            <person name="Podar M."/>
            <person name="Griffiths E."/>
            <person name="Ferreira S."/>
            <person name="Hochstein R."/>
            <person name="Heidelberg J."/>
            <person name="Johnson J."/>
            <person name="Mead D."/>
            <person name="Pohorille A."/>
            <person name="Sarmiento M."/>
            <person name="Schweighofer K."/>
            <person name="Seshadri R."/>
            <person name="Voytek M.A."/>
        </authorList>
    </citation>
    <scope>NUCLEOTIDE SEQUENCE [LARGE SCALE GENOMIC DNA]</scope>
    <source>
        <strain>Y04AAS1</strain>
    </source>
</reference>
<dbReference type="EC" id="3.1.1.29" evidence="1"/>
<dbReference type="EMBL" id="CP001130">
    <property type="protein sequence ID" value="ACG57641.1"/>
    <property type="molecule type" value="Genomic_DNA"/>
</dbReference>
<dbReference type="RefSeq" id="WP_012513997.1">
    <property type="nucleotide sequence ID" value="NC_011126.1"/>
</dbReference>
<dbReference type="SMR" id="B4U930"/>
<dbReference type="STRING" id="380749.HY04AAS1_0954"/>
<dbReference type="KEGG" id="hya:HY04AAS1_0954"/>
<dbReference type="eggNOG" id="COG0193">
    <property type="taxonomic scope" value="Bacteria"/>
</dbReference>
<dbReference type="HOGENOM" id="CLU_062456_4_1_0"/>
<dbReference type="OrthoDB" id="9800507at2"/>
<dbReference type="GO" id="GO:0005737">
    <property type="term" value="C:cytoplasm"/>
    <property type="evidence" value="ECO:0007669"/>
    <property type="project" value="UniProtKB-SubCell"/>
</dbReference>
<dbReference type="GO" id="GO:0004045">
    <property type="term" value="F:peptidyl-tRNA hydrolase activity"/>
    <property type="evidence" value="ECO:0007669"/>
    <property type="project" value="UniProtKB-UniRule"/>
</dbReference>
<dbReference type="GO" id="GO:0000049">
    <property type="term" value="F:tRNA binding"/>
    <property type="evidence" value="ECO:0007669"/>
    <property type="project" value="UniProtKB-UniRule"/>
</dbReference>
<dbReference type="GO" id="GO:0006515">
    <property type="term" value="P:protein quality control for misfolded or incompletely synthesized proteins"/>
    <property type="evidence" value="ECO:0007669"/>
    <property type="project" value="UniProtKB-UniRule"/>
</dbReference>
<dbReference type="GO" id="GO:0072344">
    <property type="term" value="P:rescue of stalled ribosome"/>
    <property type="evidence" value="ECO:0007669"/>
    <property type="project" value="UniProtKB-UniRule"/>
</dbReference>
<dbReference type="CDD" id="cd00462">
    <property type="entry name" value="PTH"/>
    <property type="match status" value="1"/>
</dbReference>
<dbReference type="FunFam" id="3.40.50.1470:FF:000001">
    <property type="entry name" value="Peptidyl-tRNA hydrolase"/>
    <property type="match status" value="1"/>
</dbReference>
<dbReference type="Gene3D" id="3.40.50.1470">
    <property type="entry name" value="Peptidyl-tRNA hydrolase"/>
    <property type="match status" value="1"/>
</dbReference>
<dbReference type="HAMAP" id="MF_00083">
    <property type="entry name" value="Pept_tRNA_hydro_bact"/>
    <property type="match status" value="1"/>
</dbReference>
<dbReference type="InterPro" id="IPR001328">
    <property type="entry name" value="Pept_tRNA_hydro"/>
</dbReference>
<dbReference type="InterPro" id="IPR018171">
    <property type="entry name" value="Pept_tRNA_hydro_CS"/>
</dbReference>
<dbReference type="InterPro" id="IPR036416">
    <property type="entry name" value="Pept_tRNA_hydro_sf"/>
</dbReference>
<dbReference type="NCBIfam" id="TIGR00447">
    <property type="entry name" value="pth"/>
    <property type="match status" value="1"/>
</dbReference>
<dbReference type="PANTHER" id="PTHR17224">
    <property type="entry name" value="PEPTIDYL-TRNA HYDROLASE"/>
    <property type="match status" value="1"/>
</dbReference>
<dbReference type="PANTHER" id="PTHR17224:SF1">
    <property type="entry name" value="PEPTIDYL-TRNA HYDROLASE"/>
    <property type="match status" value="1"/>
</dbReference>
<dbReference type="Pfam" id="PF01195">
    <property type="entry name" value="Pept_tRNA_hydro"/>
    <property type="match status" value="1"/>
</dbReference>
<dbReference type="SUPFAM" id="SSF53178">
    <property type="entry name" value="Peptidyl-tRNA hydrolase-like"/>
    <property type="match status" value="1"/>
</dbReference>
<dbReference type="PROSITE" id="PS01195">
    <property type="entry name" value="PEPT_TRNA_HYDROL_1"/>
    <property type="match status" value="1"/>
</dbReference>
<name>PTH_HYDS0</name>
<evidence type="ECO:0000255" key="1">
    <source>
        <dbReference type="HAMAP-Rule" id="MF_00083"/>
    </source>
</evidence>